<organism>
    <name type="scientific">Drosophila melanogaster</name>
    <name type="common">Fruit fly</name>
    <dbReference type="NCBI Taxonomy" id="7227"/>
    <lineage>
        <taxon>Eukaryota</taxon>
        <taxon>Metazoa</taxon>
        <taxon>Ecdysozoa</taxon>
        <taxon>Arthropoda</taxon>
        <taxon>Hexapoda</taxon>
        <taxon>Insecta</taxon>
        <taxon>Pterygota</taxon>
        <taxon>Neoptera</taxon>
        <taxon>Endopterygota</taxon>
        <taxon>Diptera</taxon>
        <taxon>Brachycera</taxon>
        <taxon>Muscomorpha</taxon>
        <taxon>Ephydroidea</taxon>
        <taxon>Drosophilidae</taxon>
        <taxon>Drosophila</taxon>
        <taxon>Sophophora</taxon>
    </lineage>
</organism>
<name>INT15_DROME</name>
<gene>
    <name evidence="3" type="primary">IntS15</name>
    <name evidence="5" type="ORF">CG5274</name>
</gene>
<accession>Q9VPF9</accession>
<reference key="1">
    <citation type="journal article" date="2000" name="Science">
        <title>The genome sequence of Drosophila melanogaster.</title>
        <authorList>
            <person name="Adams M.D."/>
            <person name="Celniker S.E."/>
            <person name="Holt R.A."/>
            <person name="Evans C.A."/>
            <person name="Gocayne J.D."/>
            <person name="Amanatides P.G."/>
            <person name="Scherer S.E."/>
            <person name="Li P.W."/>
            <person name="Hoskins R.A."/>
            <person name="Galle R.F."/>
            <person name="George R.A."/>
            <person name="Lewis S.E."/>
            <person name="Richards S."/>
            <person name="Ashburner M."/>
            <person name="Henderson S.N."/>
            <person name="Sutton G.G."/>
            <person name="Wortman J.R."/>
            <person name="Yandell M.D."/>
            <person name="Zhang Q."/>
            <person name="Chen L.X."/>
            <person name="Brandon R.C."/>
            <person name="Rogers Y.-H.C."/>
            <person name="Blazej R.G."/>
            <person name="Champe M."/>
            <person name="Pfeiffer B.D."/>
            <person name="Wan K.H."/>
            <person name="Doyle C."/>
            <person name="Baxter E.G."/>
            <person name="Helt G."/>
            <person name="Nelson C.R."/>
            <person name="Miklos G.L.G."/>
            <person name="Abril J.F."/>
            <person name="Agbayani A."/>
            <person name="An H.-J."/>
            <person name="Andrews-Pfannkoch C."/>
            <person name="Baldwin D."/>
            <person name="Ballew R.M."/>
            <person name="Basu A."/>
            <person name="Baxendale J."/>
            <person name="Bayraktaroglu L."/>
            <person name="Beasley E.M."/>
            <person name="Beeson K.Y."/>
            <person name="Benos P.V."/>
            <person name="Berman B.P."/>
            <person name="Bhandari D."/>
            <person name="Bolshakov S."/>
            <person name="Borkova D."/>
            <person name="Botchan M.R."/>
            <person name="Bouck J."/>
            <person name="Brokstein P."/>
            <person name="Brottier P."/>
            <person name="Burtis K.C."/>
            <person name="Busam D.A."/>
            <person name="Butler H."/>
            <person name="Cadieu E."/>
            <person name="Center A."/>
            <person name="Chandra I."/>
            <person name="Cherry J.M."/>
            <person name="Cawley S."/>
            <person name="Dahlke C."/>
            <person name="Davenport L.B."/>
            <person name="Davies P."/>
            <person name="de Pablos B."/>
            <person name="Delcher A."/>
            <person name="Deng Z."/>
            <person name="Mays A.D."/>
            <person name="Dew I."/>
            <person name="Dietz S.M."/>
            <person name="Dodson K."/>
            <person name="Doup L.E."/>
            <person name="Downes M."/>
            <person name="Dugan-Rocha S."/>
            <person name="Dunkov B.C."/>
            <person name="Dunn P."/>
            <person name="Durbin K.J."/>
            <person name="Evangelista C.C."/>
            <person name="Ferraz C."/>
            <person name="Ferriera S."/>
            <person name="Fleischmann W."/>
            <person name="Fosler C."/>
            <person name="Gabrielian A.E."/>
            <person name="Garg N.S."/>
            <person name="Gelbart W.M."/>
            <person name="Glasser K."/>
            <person name="Glodek A."/>
            <person name="Gong F."/>
            <person name="Gorrell J.H."/>
            <person name="Gu Z."/>
            <person name="Guan P."/>
            <person name="Harris M."/>
            <person name="Harris N.L."/>
            <person name="Harvey D.A."/>
            <person name="Heiman T.J."/>
            <person name="Hernandez J.R."/>
            <person name="Houck J."/>
            <person name="Hostin D."/>
            <person name="Houston K.A."/>
            <person name="Howland T.J."/>
            <person name="Wei M.-H."/>
            <person name="Ibegwam C."/>
            <person name="Jalali M."/>
            <person name="Kalush F."/>
            <person name="Karpen G.H."/>
            <person name="Ke Z."/>
            <person name="Kennison J.A."/>
            <person name="Ketchum K.A."/>
            <person name="Kimmel B.E."/>
            <person name="Kodira C.D."/>
            <person name="Kraft C.L."/>
            <person name="Kravitz S."/>
            <person name="Kulp D."/>
            <person name="Lai Z."/>
            <person name="Lasko P."/>
            <person name="Lei Y."/>
            <person name="Levitsky A.A."/>
            <person name="Li J.H."/>
            <person name="Li Z."/>
            <person name="Liang Y."/>
            <person name="Lin X."/>
            <person name="Liu X."/>
            <person name="Mattei B."/>
            <person name="McIntosh T.C."/>
            <person name="McLeod M.P."/>
            <person name="McPherson D."/>
            <person name="Merkulov G."/>
            <person name="Milshina N.V."/>
            <person name="Mobarry C."/>
            <person name="Morris J."/>
            <person name="Moshrefi A."/>
            <person name="Mount S.M."/>
            <person name="Moy M."/>
            <person name="Murphy B."/>
            <person name="Murphy L."/>
            <person name="Muzny D.M."/>
            <person name="Nelson D.L."/>
            <person name="Nelson D.R."/>
            <person name="Nelson K.A."/>
            <person name="Nixon K."/>
            <person name="Nusskern D.R."/>
            <person name="Pacleb J.M."/>
            <person name="Palazzolo M."/>
            <person name="Pittman G.S."/>
            <person name="Pan S."/>
            <person name="Pollard J."/>
            <person name="Puri V."/>
            <person name="Reese M.G."/>
            <person name="Reinert K."/>
            <person name="Remington K."/>
            <person name="Saunders R.D.C."/>
            <person name="Scheeler F."/>
            <person name="Shen H."/>
            <person name="Shue B.C."/>
            <person name="Siden-Kiamos I."/>
            <person name="Simpson M."/>
            <person name="Skupski M.P."/>
            <person name="Smith T.J."/>
            <person name="Spier E."/>
            <person name="Spradling A.C."/>
            <person name="Stapleton M."/>
            <person name="Strong R."/>
            <person name="Sun E."/>
            <person name="Svirskas R."/>
            <person name="Tector C."/>
            <person name="Turner R."/>
            <person name="Venter E."/>
            <person name="Wang A.H."/>
            <person name="Wang X."/>
            <person name="Wang Z.-Y."/>
            <person name="Wassarman D.A."/>
            <person name="Weinstock G.M."/>
            <person name="Weissenbach J."/>
            <person name="Williams S.M."/>
            <person name="Woodage T."/>
            <person name="Worley K.C."/>
            <person name="Wu D."/>
            <person name="Yang S."/>
            <person name="Yao Q.A."/>
            <person name="Ye J."/>
            <person name="Yeh R.-F."/>
            <person name="Zaveri J.S."/>
            <person name="Zhan M."/>
            <person name="Zhang G."/>
            <person name="Zhao Q."/>
            <person name="Zheng L."/>
            <person name="Zheng X.H."/>
            <person name="Zhong F.N."/>
            <person name="Zhong W."/>
            <person name="Zhou X."/>
            <person name="Zhu S.C."/>
            <person name="Zhu X."/>
            <person name="Smith H.O."/>
            <person name="Gibbs R.A."/>
            <person name="Myers E.W."/>
            <person name="Rubin G.M."/>
            <person name="Venter J.C."/>
        </authorList>
    </citation>
    <scope>NUCLEOTIDE SEQUENCE [LARGE SCALE GENOMIC DNA]</scope>
    <source>
        <strain>Berkeley</strain>
    </source>
</reference>
<reference key="2">
    <citation type="journal article" date="2002" name="Genome Biol.">
        <title>Annotation of the Drosophila melanogaster euchromatic genome: a systematic review.</title>
        <authorList>
            <person name="Misra S."/>
            <person name="Crosby M.A."/>
            <person name="Mungall C.J."/>
            <person name="Matthews B.B."/>
            <person name="Campbell K.S."/>
            <person name="Hradecky P."/>
            <person name="Huang Y."/>
            <person name="Kaminker J.S."/>
            <person name="Millburn G.H."/>
            <person name="Prochnik S.E."/>
            <person name="Smith C.D."/>
            <person name="Tupy J.L."/>
            <person name="Whitfield E.J."/>
            <person name="Bayraktaroglu L."/>
            <person name="Berman B.P."/>
            <person name="Bettencourt B.R."/>
            <person name="Celniker S.E."/>
            <person name="de Grey A.D.N.J."/>
            <person name="Drysdale R.A."/>
            <person name="Harris N.L."/>
            <person name="Richter J."/>
            <person name="Russo S."/>
            <person name="Schroeder A.J."/>
            <person name="Shu S.Q."/>
            <person name="Stapleton M."/>
            <person name="Yamada C."/>
            <person name="Ashburner M."/>
            <person name="Gelbart W.M."/>
            <person name="Rubin G.M."/>
            <person name="Lewis S.E."/>
        </authorList>
    </citation>
    <scope>GENOME REANNOTATION</scope>
    <source>
        <strain>Berkeley</strain>
    </source>
</reference>
<reference key="3">
    <citation type="journal article" date="2002" name="Genome Biol.">
        <title>A Drosophila full-length cDNA resource.</title>
        <authorList>
            <person name="Stapleton M."/>
            <person name="Carlson J.W."/>
            <person name="Brokstein P."/>
            <person name="Yu C."/>
            <person name="Champe M."/>
            <person name="George R.A."/>
            <person name="Guarin H."/>
            <person name="Kronmiller B."/>
            <person name="Pacleb J.M."/>
            <person name="Park S."/>
            <person name="Wan K.H."/>
            <person name="Rubin G.M."/>
            <person name="Celniker S.E."/>
        </authorList>
    </citation>
    <scope>NUCLEOTIDE SEQUENCE [LARGE SCALE MRNA]</scope>
    <source>
        <strain>Berkeley</strain>
        <tissue>Embryo</tissue>
    </source>
</reference>
<reference key="4">
    <citation type="journal article" date="2024" name="Mol. Cell">
        <title>Cytoplasmic binding partners of the Integrator endonuclease INTS11 and its paralog CPSF73 are required for their nuclear function.</title>
        <authorList>
            <person name="Lin M.H."/>
            <person name="Jensen M.K."/>
            <person name="Elrod N.D."/>
            <person name="Chu H.F."/>
            <person name="Haseley M."/>
            <person name="Beam A.C."/>
            <person name="Huang K.L."/>
            <person name="Chiang W."/>
            <person name="Russell W.K."/>
            <person name="Williams K."/>
            <person name="Proschel C."/>
            <person name="Wagner E.J."/>
            <person name="Tong L."/>
        </authorList>
    </citation>
    <scope>IDENTIFICATION IN THE INTEGRATOR COMPLEX</scope>
    <scope>SUBCELLULAR LOCATION</scope>
</reference>
<feature type="chain" id="PRO_0000462181" description="Integrator complex subunit 15">
    <location>
        <begin position="1"/>
        <end position="373"/>
    </location>
</feature>
<keyword id="KW-0539">Nucleus</keyword>
<keyword id="KW-1185">Reference proteome</keyword>
<dbReference type="EMBL" id="AE014296">
    <property type="protein sequence ID" value="AAF51594.1"/>
    <property type="molecule type" value="Genomic_DNA"/>
</dbReference>
<dbReference type="EMBL" id="AE014296">
    <property type="protein sequence ID" value="AAN12130.1"/>
    <property type="molecule type" value="Genomic_DNA"/>
</dbReference>
<dbReference type="EMBL" id="AY052148">
    <property type="protein sequence ID" value="AAK93572.1"/>
    <property type="molecule type" value="mRNA"/>
</dbReference>
<dbReference type="RefSeq" id="NP_649222.1">
    <property type="nucleotide sequence ID" value="NM_140965.3"/>
</dbReference>
<dbReference type="RefSeq" id="NP_730532.1">
    <property type="nucleotide sequence ID" value="NM_168854.2"/>
</dbReference>
<dbReference type="SMR" id="Q9VPF9"/>
<dbReference type="FunCoup" id="Q9VPF9">
    <property type="interactions" value="1354"/>
</dbReference>
<dbReference type="IntAct" id="Q9VPF9">
    <property type="interactions" value="4"/>
</dbReference>
<dbReference type="STRING" id="7227.FBpp0077890"/>
<dbReference type="PaxDb" id="7227-FBpp0077889"/>
<dbReference type="DNASU" id="40257"/>
<dbReference type="EnsemblMetazoa" id="FBtr0078231">
    <property type="protein sequence ID" value="FBpp0077889"/>
    <property type="gene ID" value="FBgn0036987"/>
</dbReference>
<dbReference type="EnsemblMetazoa" id="FBtr0078232">
    <property type="protein sequence ID" value="FBpp0077890"/>
    <property type="gene ID" value="FBgn0036987"/>
</dbReference>
<dbReference type="GeneID" id="40257"/>
<dbReference type="KEGG" id="dme:Dmel_CG5274"/>
<dbReference type="UCSC" id="CG5274-RA">
    <property type="organism name" value="d. melanogaster"/>
</dbReference>
<dbReference type="AGR" id="FB:FBgn0036987"/>
<dbReference type="FlyBase" id="FBgn0036987">
    <property type="gene designation" value="CG5274"/>
</dbReference>
<dbReference type="VEuPathDB" id="VectorBase:FBgn0036987"/>
<dbReference type="eggNOG" id="ENOG502QW9D">
    <property type="taxonomic scope" value="Eukaryota"/>
</dbReference>
<dbReference type="GeneTree" id="ENSGT00390000011370"/>
<dbReference type="HOGENOM" id="CLU_045490_0_0_1"/>
<dbReference type="InParanoid" id="Q9VPF9"/>
<dbReference type="OMA" id="DDGDCHQ"/>
<dbReference type="OrthoDB" id="2915665at2759"/>
<dbReference type="BioGRID-ORCS" id="40257">
    <property type="hits" value="0 hits in 1 CRISPR screen"/>
</dbReference>
<dbReference type="Proteomes" id="UP000000803">
    <property type="component" value="Chromosome 3L"/>
</dbReference>
<dbReference type="Bgee" id="FBgn0036987">
    <property type="expression patterns" value="Expressed in T neuron T4a (Drosophila) in embryonic/larval optic lobe (Drosophila) and 48 other cell types or tissues"/>
</dbReference>
<dbReference type="GO" id="GO:0032039">
    <property type="term" value="C:integrator complex"/>
    <property type="evidence" value="ECO:0000314"/>
    <property type="project" value="FlyBase"/>
</dbReference>
<dbReference type="GO" id="GO:0005634">
    <property type="term" value="C:nucleus"/>
    <property type="evidence" value="ECO:0000314"/>
    <property type="project" value="FlyBase"/>
</dbReference>
<dbReference type="InterPro" id="IPR027844">
    <property type="entry name" value="INTS15"/>
</dbReference>
<dbReference type="PANTHER" id="PTHR14540">
    <property type="entry name" value="INTEGRATOR COMPLEX SUBUNIT 15"/>
    <property type="match status" value="1"/>
</dbReference>
<dbReference type="PANTHER" id="PTHR14540:SF2">
    <property type="entry name" value="INTEGRATOR COMPLEX SUBUNIT 15"/>
    <property type="match status" value="1"/>
</dbReference>
<dbReference type="Pfam" id="PF14964">
    <property type="entry name" value="INTS15"/>
    <property type="match status" value="1"/>
</dbReference>
<sequence>MSMSIDSNKLLLRKGDMKLDNYPTCAVEALTRLETLIASRNKQNMVMQIISEFIFLERTPKDGDVRKSQALPISQMNLFQEFQLIIALIEYFSRPGRDATRNAIFLSLFGSHLTPQRSKLLSRLISTAVSGSVAPLLSSAGTWMQQVGCKTPLSLEVAQNIVSDFISYSRKTPEQLKQLPMVGPHFAANFMVAVADLYLNEQRSPTLNPPPDALLDTITEWMMENPTLCQASQQPLVLPAGAIAMPFTTPLAGLLRWVVLAPLVSNRSAYSNLHLSLLRALQQLVSSGESTALPSQDLMQIVKSLQSYCARLAESKTDPQADAAYQKCMERFAQAVQIALSSNCITNQIQLLCLLESLPPHKLMKIVIEAHKK</sequence>
<comment type="function">
    <text evidence="1">Component of the integrator complex, a multiprotein complex that terminates RNA polymerase II (Pol II) transcription in the promoter-proximal region of genes (By similarity). The integrator complex provides a quality checkpoint during transcription elongation by driving premature transcription termination of transcripts that are unfavorably configured for transcriptional elongation: the complex terminates transcription by (1) catalyzing dephosphorylation of the C-terminal domain (CTD) of Pol II subunit Rbp1 and Spt5, and (2) degrading the exiting nascent RNA transcript via endonuclease activity (By similarity). The integrator complex is also involved in the 3'-end processing of the U7 snRNA, and also the spliceosomal snRNAs U1, U2, U4 and U5 (By similarity).</text>
</comment>
<comment type="subunit">
    <text evidence="2">Belongs to the multiprotein complex Integrator, at least composed of IntS1, IntS2, IntS3, IntS4, omd/IntS5, IntS6, defl/IntS7, IntS8, IntS9, IntS10, IntS11, IntS12, asun/IntS13, IntS14 and IntS15 (PubMed:39032490). The core complex associates with protein phosphatase 2A subunits mts/PP2A and Pp2A-29B, to form the Integrator-PP2A (INTAC) complex (PubMed:39032490).</text>
</comment>
<comment type="subcellular location">
    <subcellularLocation>
        <location evidence="2">Nucleus</location>
    </subcellularLocation>
</comment>
<comment type="similarity">
    <text evidence="4">Belongs to the Integrator subunit 15 family.</text>
</comment>
<protein>
    <recommendedName>
        <fullName evidence="4">Integrator complex subunit 15</fullName>
        <shortName evidence="3">dIntS15</shortName>
    </recommendedName>
</protein>
<proteinExistence type="evidence at protein level"/>
<evidence type="ECO:0000250" key="1">
    <source>
        <dbReference type="UniProtKB" id="Q96N11"/>
    </source>
</evidence>
<evidence type="ECO:0000269" key="2">
    <source>
    </source>
</evidence>
<evidence type="ECO:0000303" key="3">
    <source>
    </source>
</evidence>
<evidence type="ECO:0000305" key="4"/>
<evidence type="ECO:0000312" key="5">
    <source>
        <dbReference type="FlyBase" id="FBgn0036987"/>
    </source>
</evidence>